<comment type="function">
    <text evidence="1">Potential role in vesicular protein trafficking, mainly in the early secretory pathway. Contributes to the coupled localization of TMED2 and TMED10 in the cis-Golgi network (By similarity).</text>
</comment>
<comment type="subunit">
    <text evidence="1 5">Monomer in endoplasmic reticulum, endoplasmic reticulum-Golgi intermediate compartment and cis-Golgi network. Interacts (via C-terminus) with COPG1; the interaction involves dimeric TMED3; however, there are conflicting reports on the interaction (By similarity). Interacts with GORASP1 and GORASP2.</text>
</comment>
<comment type="subcellular location">
    <subcellularLocation>
        <location evidence="2">Endoplasmic reticulum-Golgi intermediate compartment membrane</location>
        <topology evidence="3">Single-pass type I membrane protein</topology>
    </subcellularLocation>
    <subcellularLocation>
        <location evidence="2">Golgi apparatus</location>
        <location evidence="2">cis-Golgi network membrane</location>
        <topology evidence="3">Single-pass type I membrane protein</topology>
    </subcellularLocation>
    <subcellularLocation>
        <location evidence="5">Golgi apparatus</location>
        <location evidence="5">Golgi stack membrane</location>
        <topology evidence="3">Single-pass type I membrane protein</topology>
    </subcellularLocation>
    <subcellularLocation>
        <location evidence="2">Endoplasmic reticulum membrane</location>
        <topology evidence="3">Single-pass type I membrane protein</topology>
    </subcellularLocation>
    <subcellularLocation>
        <location evidence="7">Cytoplasmic vesicle</location>
        <location evidence="7">COPI-coated vesicle membrane</location>
        <topology evidence="3">Single-pass type I membrane protein</topology>
    </subcellularLocation>
    <text evidence="2">Probably cycles between compartments of the early secretatory pathway.</text>
</comment>
<comment type="similarity">
    <text evidence="8">Belongs to the EMP24/GP25L family.</text>
</comment>
<evidence type="ECO:0000250" key="1"/>
<evidence type="ECO:0000250" key="2">
    <source>
        <dbReference type="UniProtKB" id="Q9Y3Q3"/>
    </source>
</evidence>
<evidence type="ECO:0000255" key="3"/>
<evidence type="ECO:0000255" key="4">
    <source>
        <dbReference type="PROSITE-ProRule" id="PRU00096"/>
    </source>
</evidence>
<evidence type="ECO:0000269" key="5">
    <source>
    </source>
</evidence>
<evidence type="ECO:0000269" key="6">
    <source>
    </source>
</evidence>
<evidence type="ECO:0000269" key="7">
    <source>
    </source>
</evidence>
<evidence type="ECO:0000305" key="8"/>
<feature type="signal peptide" evidence="3">
    <location>
        <begin position="1"/>
        <end position="30"/>
    </location>
</feature>
<feature type="chain" id="PRO_0000010386" description="Transmembrane emp24 domain-containing protein 3">
    <location>
        <begin position="31"/>
        <end position="221"/>
    </location>
</feature>
<feature type="topological domain" description="Lumenal" evidence="3">
    <location>
        <begin position="31"/>
        <end position="184"/>
    </location>
</feature>
<feature type="transmembrane region" description="Helical" evidence="3">
    <location>
        <begin position="185"/>
        <end position="205"/>
    </location>
</feature>
<feature type="topological domain" description="Cytoplasmic" evidence="3">
    <location>
        <begin position="206"/>
        <end position="221"/>
    </location>
</feature>
<feature type="domain" description="GOLD" evidence="4">
    <location>
        <begin position="42"/>
        <end position="124"/>
    </location>
</feature>
<feature type="short sequence motif" description="COPI vesicle coat-binding" evidence="3">
    <location>
        <begin position="208"/>
        <end position="221"/>
    </location>
</feature>
<feature type="short sequence motif" description="COPII vesicle coat-binding" evidence="3">
    <location>
        <begin position="208"/>
        <end position="209"/>
    </location>
</feature>
<feature type="modified residue" description="Dimethylated arginine" evidence="6">
    <location>
        <position position="103"/>
    </location>
</feature>
<proteinExistence type="evidence at protein level"/>
<accession>Q6AY25</accession>
<keyword id="KW-0968">Cytoplasmic vesicle</keyword>
<keyword id="KW-0256">Endoplasmic reticulum</keyword>
<keyword id="KW-0333">Golgi apparatus</keyword>
<keyword id="KW-0472">Membrane</keyword>
<keyword id="KW-0488">Methylation</keyword>
<keyword id="KW-0653">Protein transport</keyword>
<keyword id="KW-1185">Reference proteome</keyword>
<keyword id="KW-0732">Signal</keyword>
<keyword id="KW-0812">Transmembrane</keyword>
<keyword id="KW-1133">Transmembrane helix</keyword>
<keyword id="KW-0813">Transport</keyword>
<organism>
    <name type="scientific">Rattus norvegicus</name>
    <name type="common">Rat</name>
    <dbReference type="NCBI Taxonomy" id="10116"/>
    <lineage>
        <taxon>Eukaryota</taxon>
        <taxon>Metazoa</taxon>
        <taxon>Chordata</taxon>
        <taxon>Craniata</taxon>
        <taxon>Vertebrata</taxon>
        <taxon>Euteleostomi</taxon>
        <taxon>Mammalia</taxon>
        <taxon>Eutheria</taxon>
        <taxon>Euarchontoglires</taxon>
        <taxon>Glires</taxon>
        <taxon>Rodentia</taxon>
        <taxon>Myomorpha</taxon>
        <taxon>Muroidea</taxon>
        <taxon>Muridae</taxon>
        <taxon>Murinae</taxon>
        <taxon>Rattus</taxon>
    </lineage>
</organism>
<reference key="1">
    <citation type="journal article" date="2004" name="Genome Res.">
        <title>The status, quality, and expansion of the NIH full-length cDNA project: the Mammalian Gene Collection (MGC).</title>
        <authorList>
            <consortium name="The MGC Project Team"/>
        </authorList>
    </citation>
    <scope>NUCLEOTIDE SEQUENCE [LARGE SCALE MRNA]</scope>
    <source>
        <tissue>Testis</tissue>
    </source>
</reference>
<reference key="2">
    <citation type="journal article" date="2001" name="J. Cell Biol.">
        <title>Golgi matrix proteins interact with p24 cargo receptors and aid their efficient retention in the Golgi apparatus.</title>
        <authorList>
            <person name="Barr F.A."/>
            <person name="Preisinger C."/>
            <person name="Kopajtich R."/>
            <person name="Koerner R."/>
        </authorList>
    </citation>
    <scope>SUBCELLULAR LOCATION</scope>
    <scope>INTERACTION WITH GORASP1 AND GORASP2</scope>
</reference>
<reference key="3">
    <citation type="journal article" date="2004" name="Mol. Biol. Cell">
        <title>Organellar proteomics reveals Golgi arginine dimethylation.</title>
        <authorList>
            <person name="Wu C.C."/>
            <person name="MacCoss M.J."/>
            <person name="Mardones G."/>
            <person name="Finnigan C."/>
            <person name="Mogelsvang S."/>
            <person name="Yates J.R. III"/>
            <person name="Howell K.E."/>
        </authorList>
    </citation>
    <scope>METHYLATION AT ARG-103</scope>
    <scope>IDENTIFICATION BY MASS SPECTROMETRY</scope>
</reference>
<reference key="4">
    <citation type="journal article" date="2005" name="Science">
        <title>Golgin tethers define subpopulations of COPI vesicles.</title>
        <authorList>
            <person name="Malsam J."/>
            <person name="Satoh A."/>
            <person name="Pelletier L."/>
            <person name="Warren G."/>
        </authorList>
    </citation>
    <scope>SUBCELLULAR LOCATION</scope>
</reference>
<sequence length="221" mass="25510">MGNEVPRASSFQMLMLLLLLLLLRAERLRGAELTFELPDNAKQCFHEEVEQGVKFSLDYQVITGGHYDVDCYVEDPMGNIIYRETKKQYDSFTYKTEVKGVYRFCFSNEFSTFSHKTVYFDFQVGDEPPILPDMGNRVTALTQMESACVTIHEALKTVIDSQTHYRLREAQDRARAEDLNSRVSYWSVGETIALFVVSFSQVLLLKSFFTEKRPINRAVHS</sequence>
<gene>
    <name type="primary">Tmed3</name>
</gene>
<dbReference type="EMBL" id="BC079220">
    <property type="protein sequence ID" value="AAH79220.1"/>
    <property type="molecule type" value="mRNA"/>
</dbReference>
<dbReference type="RefSeq" id="NP_001004249.1">
    <property type="nucleotide sequence ID" value="NM_001004249.1"/>
</dbReference>
<dbReference type="SMR" id="Q6AY25"/>
<dbReference type="FunCoup" id="Q6AY25">
    <property type="interactions" value="461"/>
</dbReference>
<dbReference type="STRING" id="10116.ENSRNOP00000018603"/>
<dbReference type="iPTMnet" id="Q6AY25"/>
<dbReference type="PhosphoSitePlus" id="Q6AY25"/>
<dbReference type="PaxDb" id="10116-ENSRNOP00000018603"/>
<dbReference type="GeneID" id="300888"/>
<dbReference type="KEGG" id="rno:300888"/>
<dbReference type="UCSC" id="RGD:1303327">
    <property type="organism name" value="rat"/>
</dbReference>
<dbReference type="AGR" id="RGD:1303327"/>
<dbReference type="CTD" id="23423"/>
<dbReference type="RGD" id="1303327">
    <property type="gene designation" value="Tmed3"/>
</dbReference>
<dbReference type="VEuPathDB" id="HostDB:ENSRNOG00000013889"/>
<dbReference type="eggNOG" id="KOG1693">
    <property type="taxonomic scope" value="Eukaryota"/>
</dbReference>
<dbReference type="HOGENOM" id="CLU_066963_6_0_1"/>
<dbReference type="InParanoid" id="Q6AY25"/>
<dbReference type="OrthoDB" id="62956at2759"/>
<dbReference type="PhylomeDB" id="Q6AY25"/>
<dbReference type="TreeFam" id="TF313000"/>
<dbReference type="Reactome" id="R-RNO-6807878">
    <property type="pathway name" value="COPI-mediated anterograde transport"/>
</dbReference>
<dbReference type="Reactome" id="R-RNO-6811434">
    <property type="pathway name" value="COPI-dependent Golgi-to-ER retrograde traffic"/>
</dbReference>
<dbReference type="PRO" id="PR:Q6AY25"/>
<dbReference type="Proteomes" id="UP000002494">
    <property type="component" value="Chromosome 8"/>
</dbReference>
<dbReference type="Bgee" id="ENSRNOG00000013889">
    <property type="expression patterns" value="Expressed in pancreas and 20 other cell types or tissues"/>
</dbReference>
<dbReference type="GO" id="GO:0030126">
    <property type="term" value="C:COPI vesicle coat"/>
    <property type="evidence" value="ECO:0000314"/>
    <property type="project" value="UniProtKB"/>
</dbReference>
<dbReference type="GO" id="GO:0030134">
    <property type="term" value="C:COPII-coated ER to Golgi transport vesicle"/>
    <property type="evidence" value="ECO:0000318"/>
    <property type="project" value="GO_Central"/>
</dbReference>
<dbReference type="GO" id="GO:0005783">
    <property type="term" value="C:endoplasmic reticulum"/>
    <property type="evidence" value="ECO:0000250"/>
    <property type="project" value="UniProtKB"/>
</dbReference>
<dbReference type="GO" id="GO:0005789">
    <property type="term" value="C:endoplasmic reticulum membrane"/>
    <property type="evidence" value="ECO:0007669"/>
    <property type="project" value="UniProtKB-SubCell"/>
</dbReference>
<dbReference type="GO" id="GO:0005793">
    <property type="term" value="C:endoplasmic reticulum-Golgi intermediate compartment"/>
    <property type="evidence" value="ECO:0000250"/>
    <property type="project" value="UniProtKB"/>
</dbReference>
<dbReference type="GO" id="GO:0033116">
    <property type="term" value="C:endoplasmic reticulum-Golgi intermediate compartment membrane"/>
    <property type="evidence" value="ECO:0007669"/>
    <property type="project" value="UniProtKB-SubCell"/>
</dbReference>
<dbReference type="GO" id="GO:0005794">
    <property type="term" value="C:Golgi apparatus"/>
    <property type="evidence" value="ECO:0000314"/>
    <property type="project" value="UniProtKB"/>
</dbReference>
<dbReference type="GO" id="GO:0032580">
    <property type="term" value="C:Golgi cisterna membrane"/>
    <property type="evidence" value="ECO:0007669"/>
    <property type="project" value="UniProtKB-SubCell"/>
</dbReference>
<dbReference type="GO" id="GO:0006888">
    <property type="term" value="P:endoplasmic reticulum to Golgi vesicle-mediated transport"/>
    <property type="evidence" value="ECO:0000318"/>
    <property type="project" value="GO_Central"/>
</dbReference>
<dbReference type="GO" id="GO:0007030">
    <property type="term" value="P:Golgi organization"/>
    <property type="evidence" value="ECO:0000318"/>
    <property type="project" value="GO_Central"/>
</dbReference>
<dbReference type="GO" id="GO:0006886">
    <property type="term" value="P:intracellular protein transport"/>
    <property type="evidence" value="ECO:0000318"/>
    <property type="project" value="GO_Central"/>
</dbReference>
<dbReference type="Gene3D" id="2.60.120.680">
    <property type="entry name" value="GOLD domain"/>
    <property type="match status" value="1"/>
</dbReference>
<dbReference type="InterPro" id="IPR015720">
    <property type="entry name" value="Emp24-like"/>
</dbReference>
<dbReference type="InterPro" id="IPR009038">
    <property type="entry name" value="GOLD_dom"/>
</dbReference>
<dbReference type="InterPro" id="IPR036598">
    <property type="entry name" value="GOLD_dom_sf"/>
</dbReference>
<dbReference type="PANTHER" id="PTHR22811">
    <property type="entry name" value="TRANSMEMBRANE EMP24 DOMAIN-CONTAINING PROTEIN"/>
    <property type="match status" value="1"/>
</dbReference>
<dbReference type="Pfam" id="PF01105">
    <property type="entry name" value="EMP24_GP25L"/>
    <property type="match status" value="1"/>
</dbReference>
<dbReference type="SMART" id="SM01190">
    <property type="entry name" value="EMP24_GP25L"/>
    <property type="match status" value="1"/>
</dbReference>
<dbReference type="SUPFAM" id="SSF101576">
    <property type="entry name" value="Supernatant protein factor (SPF), C-terminal domain"/>
    <property type="match status" value="1"/>
</dbReference>
<dbReference type="PROSITE" id="PS50866">
    <property type="entry name" value="GOLD"/>
    <property type="match status" value="1"/>
</dbReference>
<name>TMED3_RAT</name>
<protein>
    <recommendedName>
        <fullName>Transmembrane emp24 domain-containing protein 3</fullName>
    </recommendedName>
    <alternativeName>
        <fullName>p24 family protein gamma-4</fullName>
        <shortName>p24gamma4</shortName>
    </alternativeName>
</protein>